<feature type="chain" id="PRO_0000134536" description="Orotidine 5'-phosphate decarboxylase">
    <location>
        <begin position="1"/>
        <end position="233"/>
    </location>
</feature>
<feature type="active site" description="Proton donor" evidence="1">
    <location>
        <position position="63"/>
    </location>
</feature>
<feature type="binding site" evidence="1">
    <location>
        <position position="12"/>
    </location>
    <ligand>
        <name>substrate</name>
    </ligand>
</feature>
<feature type="binding site" evidence="1">
    <location>
        <position position="34"/>
    </location>
    <ligand>
        <name>substrate</name>
    </ligand>
</feature>
<feature type="binding site" evidence="1">
    <location>
        <begin position="61"/>
        <end position="70"/>
    </location>
    <ligand>
        <name>substrate</name>
    </ligand>
</feature>
<feature type="binding site" evidence="1">
    <location>
        <position position="116"/>
    </location>
    <ligand>
        <name>substrate</name>
    </ligand>
</feature>
<feature type="binding site" evidence="1">
    <location>
        <position position="181"/>
    </location>
    <ligand>
        <name>substrate</name>
    </ligand>
</feature>
<feature type="binding site" evidence="1">
    <location>
        <position position="190"/>
    </location>
    <ligand>
        <name>substrate</name>
    </ligand>
</feature>
<feature type="binding site" evidence="1">
    <location>
        <position position="210"/>
    </location>
    <ligand>
        <name>substrate</name>
    </ligand>
</feature>
<feature type="binding site" evidence="1">
    <location>
        <position position="211"/>
    </location>
    <ligand>
        <name>substrate</name>
    </ligand>
</feature>
<dbReference type="EC" id="4.1.1.23" evidence="1"/>
<dbReference type="EMBL" id="AE005673">
    <property type="protein sequence ID" value="AAK22092.1"/>
    <property type="molecule type" value="Genomic_DNA"/>
</dbReference>
<dbReference type="PIR" id="H87261">
    <property type="entry name" value="H87261"/>
</dbReference>
<dbReference type="RefSeq" id="NP_418924.1">
    <property type="nucleotide sequence ID" value="NC_002696.2"/>
</dbReference>
<dbReference type="RefSeq" id="WP_010917994.1">
    <property type="nucleotide sequence ID" value="NC_002696.2"/>
</dbReference>
<dbReference type="SMR" id="Q9ABW5"/>
<dbReference type="STRING" id="190650.CC_0105"/>
<dbReference type="EnsemblBacteria" id="AAK22092">
    <property type="protein sequence ID" value="AAK22092"/>
    <property type="gene ID" value="CC_0105"/>
</dbReference>
<dbReference type="KEGG" id="ccr:CC_0105"/>
<dbReference type="PATRIC" id="fig|190650.5.peg.102"/>
<dbReference type="eggNOG" id="COG0284">
    <property type="taxonomic scope" value="Bacteria"/>
</dbReference>
<dbReference type="HOGENOM" id="CLU_067069_1_0_5"/>
<dbReference type="BioCyc" id="CAULO:CC0105-MONOMER"/>
<dbReference type="UniPathway" id="UPA00070">
    <property type="reaction ID" value="UER00120"/>
</dbReference>
<dbReference type="Proteomes" id="UP000001816">
    <property type="component" value="Chromosome"/>
</dbReference>
<dbReference type="GO" id="GO:0005829">
    <property type="term" value="C:cytosol"/>
    <property type="evidence" value="ECO:0007669"/>
    <property type="project" value="TreeGrafter"/>
</dbReference>
<dbReference type="GO" id="GO:0004590">
    <property type="term" value="F:orotidine-5'-phosphate decarboxylase activity"/>
    <property type="evidence" value="ECO:0007669"/>
    <property type="project" value="UniProtKB-UniRule"/>
</dbReference>
<dbReference type="GO" id="GO:0006207">
    <property type="term" value="P:'de novo' pyrimidine nucleobase biosynthetic process"/>
    <property type="evidence" value="ECO:0007669"/>
    <property type="project" value="InterPro"/>
</dbReference>
<dbReference type="GO" id="GO:0044205">
    <property type="term" value="P:'de novo' UMP biosynthetic process"/>
    <property type="evidence" value="ECO:0007669"/>
    <property type="project" value="UniProtKB-UniRule"/>
</dbReference>
<dbReference type="CDD" id="cd04725">
    <property type="entry name" value="OMP_decarboxylase_like"/>
    <property type="match status" value="1"/>
</dbReference>
<dbReference type="Gene3D" id="3.20.20.70">
    <property type="entry name" value="Aldolase class I"/>
    <property type="match status" value="1"/>
</dbReference>
<dbReference type="HAMAP" id="MF_01200_B">
    <property type="entry name" value="OMPdecase_type1_B"/>
    <property type="match status" value="1"/>
</dbReference>
<dbReference type="InterPro" id="IPR013785">
    <property type="entry name" value="Aldolase_TIM"/>
</dbReference>
<dbReference type="InterPro" id="IPR014732">
    <property type="entry name" value="OMPdecase"/>
</dbReference>
<dbReference type="InterPro" id="IPR018089">
    <property type="entry name" value="OMPdecase_AS"/>
</dbReference>
<dbReference type="InterPro" id="IPR047596">
    <property type="entry name" value="OMPdecase_bac"/>
</dbReference>
<dbReference type="InterPro" id="IPR001754">
    <property type="entry name" value="OMPdeCOase_dom"/>
</dbReference>
<dbReference type="InterPro" id="IPR011060">
    <property type="entry name" value="RibuloseP-bd_barrel"/>
</dbReference>
<dbReference type="NCBIfam" id="NF001273">
    <property type="entry name" value="PRK00230.1"/>
    <property type="match status" value="1"/>
</dbReference>
<dbReference type="NCBIfam" id="TIGR01740">
    <property type="entry name" value="pyrF"/>
    <property type="match status" value="1"/>
</dbReference>
<dbReference type="PANTHER" id="PTHR32119">
    <property type="entry name" value="OROTIDINE 5'-PHOSPHATE DECARBOXYLASE"/>
    <property type="match status" value="1"/>
</dbReference>
<dbReference type="PANTHER" id="PTHR32119:SF2">
    <property type="entry name" value="OROTIDINE 5'-PHOSPHATE DECARBOXYLASE"/>
    <property type="match status" value="1"/>
</dbReference>
<dbReference type="Pfam" id="PF00215">
    <property type="entry name" value="OMPdecase"/>
    <property type="match status" value="1"/>
</dbReference>
<dbReference type="SMART" id="SM00934">
    <property type="entry name" value="OMPdecase"/>
    <property type="match status" value="1"/>
</dbReference>
<dbReference type="SUPFAM" id="SSF51366">
    <property type="entry name" value="Ribulose-phoshate binding barrel"/>
    <property type="match status" value="1"/>
</dbReference>
<dbReference type="PROSITE" id="PS00156">
    <property type="entry name" value="OMPDECASE"/>
    <property type="match status" value="1"/>
</dbReference>
<gene>
    <name evidence="1" type="primary">pyrF</name>
    <name type="ordered locus">CC_0105</name>
</gene>
<accession>Q9ABW5</accession>
<reference key="1">
    <citation type="journal article" date="2001" name="Proc. Natl. Acad. Sci. U.S.A.">
        <title>Complete genome sequence of Caulobacter crescentus.</title>
        <authorList>
            <person name="Nierman W.C."/>
            <person name="Feldblyum T.V."/>
            <person name="Laub M.T."/>
            <person name="Paulsen I.T."/>
            <person name="Nelson K.E."/>
            <person name="Eisen J.A."/>
            <person name="Heidelberg J.F."/>
            <person name="Alley M.R.K."/>
            <person name="Ohta N."/>
            <person name="Maddock J.R."/>
            <person name="Potocka I."/>
            <person name="Nelson W.C."/>
            <person name="Newton A."/>
            <person name="Stephens C."/>
            <person name="Phadke N.D."/>
            <person name="Ely B."/>
            <person name="DeBoy R.T."/>
            <person name="Dodson R.J."/>
            <person name="Durkin A.S."/>
            <person name="Gwinn M.L."/>
            <person name="Haft D.H."/>
            <person name="Kolonay J.F."/>
            <person name="Smit J."/>
            <person name="Craven M.B."/>
            <person name="Khouri H.M."/>
            <person name="Shetty J."/>
            <person name="Berry K.J."/>
            <person name="Utterback T.R."/>
            <person name="Tran K."/>
            <person name="Wolf A.M."/>
            <person name="Vamathevan J.J."/>
            <person name="Ermolaeva M.D."/>
            <person name="White O."/>
            <person name="Salzberg S.L."/>
            <person name="Venter J.C."/>
            <person name="Shapiro L."/>
            <person name="Fraser C.M."/>
        </authorList>
    </citation>
    <scope>NUCLEOTIDE SEQUENCE [LARGE SCALE GENOMIC DNA]</scope>
    <source>
        <strain>ATCC 19089 / CIP 103742 / CB 15</strain>
    </source>
</reference>
<name>PYRF_CAUVC</name>
<keyword id="KW-0210">Decarboxylase</keyword>
<keyword id="KW-0456">Lyase</keyword>
<keyword id="KW-0665">Pyrimidine biosynthesis</keyword>
<keyword id="KW-1185">Reference proteome</keyword>
<evidence type="ECO:0000255" key="1">
    <source>
        <dbReference type="HAMAP-Rule" id="MF_01200"/>
    </source>
</evidence>
<sequence length="233" mass="24629">MTADPRLIVPLDLPTVDDARAMVERLGDAVSFYKIGLELLASDGMGLAHDLKASGKSIFLDWKLHDIGATVERSARVLATSGCDLLTVHAEPQVMQAAVKARGDSSLKILAVTVLTSLTDADLVEMGYAFTARDLVERRVRQALACGVDGIVSSPHEAALAREIANDAGQPEFLIVTPGVRPEWSAKNDQARAATPADALRAGATHLVCGRPITAANDPREAALKVVTEMAGI</sequence>
<organism>
    <name type="scientific">Caulobacter vibrioides (strain ATCC 19089 / CIP 103742 / CB 15)</name>
    <name type="common">Caulobacter crescentus</name>
    <dbReference type="NCBI Taxonomy" id="190650"/>
    <lineage>
        <taxon>Bacteria</taxon>
        <taxon>Pseudomonadati</taxon>
        <taxon>Pseudomonadota</taxon>
        <taxon>Alphaproteobacteria</taxon>
        <taxon>Caulobacterales</taxon>
        <taxon>Caulobacteraceae</taxon>
        <taxon>Caulobacter</taxon>
    </lineage>
</organism>
<comment type="function">
    <text evidence="1">Catalyzes the decarboxylation of orotidine 5'-monophosphate (OMP) to uridine 5'-monophosphate (UMP).</text>
</comment>
<comment type="catalytic activity">
    <reaction evidence="1">
        <text>orotidine 5'-phosphate + H(+) = UMP + CO2</text>
        <dbReference type="Rhea" id="RHEA:11596"/>
        <dbReference type="ChEBI" id="CHEBI:15378"/>
        <dbReference type="ChEBI" id="CHEBI:16526"/>
        <dbReference type="ChEBI" id="CHEBI:57538"/>
        <dbReference type="ChEBI" id="CHEBI:57865"/>
        <dbReference type="EC" id="4.1.1.23"/>
    </reaction>
</comment>
<comment type="pathway">
    <text evidence="1">Pyrimidine metabolism; UMP biosynthesis via de novo pathway; UMP from orotate: step 2/2.</text>
</comment>
<comment type="subunit">
    <text evidence="1">Homodimer.</text>
</comment>
<comment type="similarity">
    <text evidence="1">Belongs to the OMP decarboxylase family. Type 1 subfamily.</text>
</comment>
<proteinExistence type="inferred from homology"/>
<protein>
    <recommendedName>
        <fullName evidence="1">Orotidine 5'-phosphate decarboxylase</fullName>
        <ecNumber evidence="1">4.1.1.23</ecNumber>
    </recommendedName>
    <alternativeName>
        <fullName evidence="1">OMP decarboxylase</fullName>
        <shortName evidence="1">OMPDCase</shortName>
        <shortName evidence="1">OMPdecase</shortName>
    </alternativeName>
</protein>